<name>YSDE_ECOLI</name>
<organism>
    <name type="scientific">Escherichia coli (strain K12)</name>
    <dbReference type="NCBI Taxonomy" id="83333"/>
    <lineage>
        <taxon>Bacteria</taxon>
        <taxon>Pseudomonadati</taxon>
        <taxon>Pseudomonadota</taxon>
        <taxon>Gammaproteobacteria</taxon>
        <taxon>Enterobacterales</taxon>
        <taxon>Enterobacteriaceae</taxon>
        <taxon>Escherichia</taxon>
    </lineage>
</organism>
<feature type="chain" id="PRO_0000447169" description="Protein YsdE">
    <location>
        <begin position="1"/>
        <end position="24"/>
    </location>
</feature>
<gene>
    <name evidence="2" type="primary">ysdE</name>
    <name evidence="3" type="ordered locus">b4798</name>
</gene>
<reference key="1">
    <citation type="journal article" date="1997" name="Science">
        <title>The complete genome sequence of Escherichia coli K-12.</title>
        <authorList>
            <person name="Blattner F.R."/>
            <person name="Plunkett G. III"/>
            <person name="Bloch C.A."/>
            <person name="Perna N.T."/>
            <person name="Burland V."/>
            <person name="Riley M."/>
            <person name="Collado-Vides J."/>
            <person name="Glasner J.D."/>
            <person name="Rode C.K."/>
            <person name="Mayhew G.F."/>
            <person name="Gregor J."/>
            <person name="Davis N.W."/>
            <person name="Kirkpatrick H.A."/>
            <person name="Goeden M.A."/>
            <person name="Rose D.J."/>
            <person name="Mau B."/>
            <person name="Shao Y."/>
        </authorList>
    </citation>
    <scope>NUCLEOTIDE SEQUENCE [LARGE SCALE GENOMIC DNA]</scope>
    <source>
        <strain>K12 / MG1655 / ATCC 47076</strain>
    </source>
</reference>
<reference key="2">
    <citation type="journal article" date="2019" name="MBio">
        <title>Identifying small proteins by ribosome profiling with stalled initiation complexes.</title>
        <authorList>
            <person name="Weaver J."/>
            <person name="Mohammad F."/>
            <person name="Buskirk A.R."/>
            <person name="Storz G."/>
        </authorList>
    </citation>
    <scope>IDENTIFICATION</scope>
    <scope>INDUCTION</scope>
    <source>
        <strain>K12 / MG1655 / ATCC 47076</strain>
    </source>
</reference>
<comment type="induction">
    <text evidence="1">Expressed in both exponential and stationary phase in rich medium; expression is considerably higher during exponential phase (at protein level).</text>
</comment>
<protein>
    <recommendedName>
        <fullName evidence="2">Protein YsdE</fullName>
    </recommendedName>
</protein>
<accession>P0DSH6</accession>
<accession>A0A7H2C7A5</accession>
<evidence type="ECO:0000269" key="1">
    <source>
    </source>
</evidence>
<evidence type="ECO:0000303" key="2">
    <source>
    </source>
</evidence>
<evidence type="ECO:0000312" key="3">
    <source>
        <dbReference type="EMBL" id="QNV50552.1"/>
    </source>
</evidence>
<keyword id="KW-1185">Reference proteome</keyword>
<proteinExistence type="evidence at protein level"/>
<dbReference type="EMBL" id="U00096">
    <property type="protein sequence ID" value="QNV50552.1"/>
    <property type="molecule type" value="Genomic_DNA"/>
</dbReference>
<dbReference type="InParanoid" id="P0DSH6"/>
<dbReference type="BioCyc" id="EcoCyc:MONOMER0-4512"/>
<dbReference type="Proteomes" id="UP000000625">
    <property type="component" value="Chromosome"/>
</dbReference>
<sequence length="24" mass="2827">MNVSQIYARNGELFSGRICKQKRQ</sequence>